<dbReference type="EC" id="2.3.1.274" evidence="1"/>
<dbReference type="EMBL" id="AP009484">
    <property type="protein sequence ID" value="BAH17521.1"/>
    <property type="molecule type" value="Genomic_DNA"/>
</dbReference>
<dbReference type="RefSeq" id="WP_012656721.1">
    <property type="nucleotide sequence ID" value="NC_011999.1"/>
</dbReference>
<dbReference type="SMR" id="B9EBB0"/>
<dbReference type="STRING" id="458233.MCCL_0814"/>
<dbReference type="KEGG" id="mcl:MCCL_0814"/>
<dbReference type="eggNOG" id="COG0416">
    <property type="taxonomic scope" value="Bacteria"/>
</dbReference>
<dbReference type="HOGENOM" id="CLU_039379_1_1_9"/>
<dbReference type="OrthoDB" id="9806408at2"/>
<dbReference type="UniPathway" id="UPA00085"/>
<dbReference type="Proteomes" id="UP000001383">
    <property type="component" value="Chromosome"/>
</dbReference>
<dbReference type="GO" id="GO:0005737">
    <property type="term" value="C:cytoplasm"/>
    <property type="evidence" value="ECO:0007669"/>
    <property type="project" value="UniProtKB-SubCell"/>
</dbReference>
<dbReference type="GO" id="GO:0043811">
    <property type="term" value="F:phosphate:acyl-[acyl carrier protein] acyltransferase activity"/>
    <property type="evidence" value="ECO:0007669"/>
    <property type="project" value="UniProtKB-UniRule"/>
</dbReference>
<dbReference type="GO" id="GO:0006633">
    <property type="term" value="P:fatty acid biosynthetic process"/>
    <property type="evidence" value="ECO:0007669"/>
    <property type="project" value="UniProtKB-UniRule"/>
</dbReference>
<dbReference type="GO" id="GO:0008654">
    <property type="term" value="P:phospholipid biosynthetic process"/>
    <property type="evidence" value="ECO:0007669"/>
    <property type="project" value="UniProtKB-KW"/>
</dbReference>
<dbReference type="Gene3D" id="3.40.718.10">
    <property type="entry name" value="Isopropylmalate Dehydrogenase"/>
    <property type="match status" value="1"/>
</dbReference>
<dbReference type="HAMAP" id="MF_00019">
    <property type="entry name" value="PlsX"/>
    <property type="match status" value="1"/>
</dbReference>
<dbReference type="InterPro" id="IPR003664">
    <property type="entry name" value="FA_synthesis"/>
</dbReference>
<dbReference type="InterPro" id="IPR012281">
    <property type="entry name" value="Phospholipid_synth_PlsX-like"/>
</dbReference>
<dbReference type="NCBIfam" id="TIGR00182">
    <property type="entry name" value="plsX"/>
    <property type="match status" value="1"/>
</dbReference>
<dbReference type="PANTHER" id="PTHR30100">
    <property type="entry name" value="FATTY ACID/PHOSPHOLIPID SYNTHESIS PROTEIN PLSX"/>
    <property type="match status" value="1"/>
</dbReference>
<dbReference type="PANTHER" id="PTHR30100:SF1">
    <property type="entry name" value="PHOSPHATE ACYLTRANSFERASE"/>
    <property type="match status" value="1"/>
</dbReference>
<dbReference type="Pfam" id="PF02504">
    <property type="entry name" value="FA_synthesis"/>
    <property type="match status" value="1"/>
</dbReference>
<dbReference type="PIRSF" id="PIRSF002465">
    <property type="entry name" value="Phsphlp_syn_PlsX"/>
    <property type="match status" value="1"/>
</dbReference>
<dbReference type="SUPFAM" id="SSF53659">
    <property type="entry name" value="Isocitrate/Isopropylmalate dehydrogenase-like"/>
    <property type="match status" value="1"/>
</dbReference>
<name>PLSX_MACCJ</name>
<feature type="chain" id="PRO_1000193140" description="Phosphate acyltransferase">
    <location>
        <begin position="1"/>
        <end position="326"/>
    </location>
</feature>
<comment type="function">
    <text evidence="1">Catalyzes the reversible formation of acyl-phosphate (acyl-PO(4)) from acyl-[acyl-carrier-protein] (acyl-ACP). This enzyme utilizes acyl-ACP as fatty acyl donor, but not acyl-CoA.</text>
</comment>
<comment type="catalytic activity">
    <reaction evidence="1">
        <text>a fatty acyl-[ACP] + phosphate = an acyl phosphate + holo-[ACP]</text>
        <dbReference type="Rhea" id="RHEA:42292"/>
        <dbReference type="Rhea" id="RHEA-COMP:9685"/>
        <dbReference type="Rhea" id="RHEA-COMP:14125"/>
        <dbReference type="ChEBI" id="CHEBI:43474"/>
        <dbReference type="ChEBI" id="CHEBI:59918"/>
        <dbReference type="ChEBI" id="CHEBI:64479"/>
        <dbReference type="ChEBI" id="CHEBI:138651"/>
        <dbReference type="EC" id="2.3.1.274"/>
    </reaction>
</comment>
<comment type="pathway">
    <text evidence="1">Lipid metabolism; phospholipid metabolism.</text>
</comment>
<comment type="subunit">
    <text evidence="1">Homodimer. Probably interacts with PlsY.</text>
</comment>
<comment type="subcellular location">
    <subcellularLocation>
        <location evidence="1">Cytoplasm</location>
    </subcellularLocation>
    <text evidence="1">Associated with the membrane possibly through PlsY.</text>
</comment>
<comment type="similarity">
    <text evidence="1">Belongs to the PlsX family.</text>
</comment>
<proteinExistence type="inferred from homology"/>
<evidence type="ECO:0000255" key="1">
    <source>
        <dbReference type="HAMAP-Rule" id="MF_00019"/>
    </source>
</evidence>
<keyword id="KW-0963">Cytoplasm</keyword>
<keyword id="KW-0444">Lipid biosynthesis</keyword>
<keyword id="KW-0443">Lipid metabolism</keyword>
<keyword id="KW-0594">Phospholipid biosynthesis</keyword>
<keyword id="KW-1208">Phospholipid metabolism</keyword>
<keyword id="KW-1185">Reference proteome</keyword>
<keyword id="KW-0808">Transferase</keyword>
<sequence length="326" mass="35670">MIKIAVDMHGGDNAPDIVLDGIEMFLKEFNDVEIHLYGDEKENRINHPRLTMHHTTDVITMDDEPVRAIRRKKDASMVRAAESVKLKETDAVVSAGNTGALMAAGLFVIGRIKGIERPALALTLPTINDEGFMLLDMGANADAKPEHLVQYAKMASIYAHKNRGISNPSVGLANIGTEDKKGNQLARDTFNLLKEETSINFIGNVESKALLNYAADIVVTDGFTGNMILKTLEGTANNIFKMLKSTLLASTKTKIAAGLIKKDLMQLKNKMDYSEYGGAILFGVDGIVIKAHGSSDKKAFFNALKQVRQSAREDVISLLKQEVTHE</sequence>
<organism>
    <name type="scientific">Macrococcus caseolyticus (strain JCSC5402)</name>
    <name type="common">Macrococcoides caseolyticum</name>
    <dbReference type="NCBI Taxonomy" id="458233"/>
    <lineage>
        <taxon>Bacteria</taxon>
        <taxon>Bacillati</taxon>
        <taxon>Bacillota</taxon>
        <taxon>Bacilli</taxon>
        <taxon>Bacillales</taxon>
        <taxon>Staphylococcaceae</taxon>
        <taxon>Macrococcoides</taxon>
    </lineage>
</organism>
<reference key="1">
    <citation type="journal article" date="2009" name="J. Bacteriol.">
        <title>Complete genome sequence of Macrococcus caseolyticus strain JCSCS5402, reflecting the ancestral genome of the human-pathogenic staphylococci.</title>
        <authorList>
            <person name="Baba T."/>
            <person name="Kuwahara-Arai K."/>
            <person name="Uchiyama I."/>
            <person name="Takeuchi F."/>
            <person name="Ito T."/>
            <person name="Hiramatsu K."/>
        </authorList>
    </citation>
    <scope>NUCLEOTIDE SEQUENCE [LARGE SCALE GENOMIC DNA]</scope>
    <source>
        <strain>JCSC5402</strain>
    </source>
</reference>
<gene>
    <name evidence="1" type="primary">plsX</name>
    <name type="ordered locus">MCCL_0814</name>
</gene>
<protein>
    <recommendedName>
        <fullName evidence="1">Phosphate acyltransferase</fullName>
        <ecNumber evidence="1">2.3.1.274</ecNumber>
    </recommendedName>
    <alternativeName>
        <fullName evidence="1">Acyl-ACP phosphotransacylase</fullName>
    </alternativeName>
    <alternativeName>
        <fullName evidence="1">Acyl-[acyl-carrier-protein]--phosphate acyltransferase</fullName>
    </alternativeName>
    <alternativeName>
        <fullName evidence="1">Phosphate-acyl-ACP acyltransferase</fullName>
    </alternativeName>
</protein>
<accession>B9EBB0</accession>